<comment type="function">
    <text evidence="1">Catalyzes the removal of terminal sialic acid residues from viral and cellular glycoconjugates. Cleaves off the terminal sialic acids on the glycosylated HA during virus budding to facilitate virus release. Additionally helps virus spread through the circulation by further removing sialic acids from the cell surface. These cleavages prevent self-aggregation and ensure the efficient spread of the progeny virus from cell to cell. Otherwise, infection would be limited to one round of replication. Described as a receptor-destroying enzyme because it cleaves a terminal sialic acid from the cellular receptors. May facilitate viral invasion of the upper airways by cleaving the sialic acid moieties on the mucin of the airway epithelial cells. Likely to plays a role in the budding process through its association with lipid rafts during intracellular transport. May additionally display a raft-association independent effect on budding. Plays a role in the determination of host range restriction on replication and virulence. Sialidase activity in late endosome/lysosome traffic seems to enhance virus replication.</text>
</comment>
<comment type="catalytic activity">
    <reaction evidence="1">
        <text>Hydrolysis of alpha-(2-&gt;3)-, alpha-(2-&gt;6)-, alpha-(2-&gt;8)- glycosidic linkages of terminal sialic acid residues in oligosaccharides, glycoproteins, glycolipids, colominic acid and synthetic substrates.</text>
        <dbReference type="EC" id="3.2.1.18"/>
    </reaction>
</comment>
<comment type="cofactor">
    <cofactor evidence="1">
        <name>Ca(2+)</name>
        <dbReference type="ChEBI" id="CHEBI:29108"/>
    </cofactor>
</comment>
<comment type="activity regulation">
    <text evidence="1">Inhibited by the neuraminidase inhibitors zanamivir (Relenza) and oseltamivir (Tamiflu). These drugs interfere with the release of progeny virus from infected cells and are effective against all influenza strains. Resistance to neuraminidase inhibitors is quite rare.</text>
</comment>
<comment type="subunit">
    <text evidence="1">Homotetramer.</text>
</comment>
<comment type="subcellular location">
    <subcellularLocation>
        <location evidence="1">Virion membrane</location>
    </subcellularLocation>
    <subcellularLocation>
        <location evidence="1">Host apical cell membrane</location>
        <topology evidence="1">Single-pass type II membrane protein</topology>
    </subcellularLocation>
    <text evidence="1">Preferentially accumulates at the apical plasma membrane in infected polarized epithelial cells, which is the virus assembly site. Uses lipid rafts for cell surface transport and apical sorting. In the virion, forms a mushroom-shaped spike on the surface of the membrane.</text>
</comment>
<comment type="domain">
    <text evidence="1">Intact N-terminus is essential for virion morphogenesis. Possesses two apical sorting signals, one in the ectodomain, which is likely to be a glycan, and the other in the transmembrane domain. The transmembrane domain also plays a role in lipid raft association.</text>
</comment>
<comment type="PTM">
    <text evidence="1">N-glycosylated.</text>
</comment>
<comment type="miscellaneous">
    <text>The influenza A genome consist of 8 RNA segments. Genetic variation of hemagglutinin and/or neuraminidase genes results in the emergence of new influenza strains. The mechanism of variation can be the result of point mutations or the result of genetic reassortment between segments of two different strains.</text>
</comment>
<comment type="similarity">
    <text evidence="1">Belongs to the glycosyl hydrolase 34 family.</text>
</comment>
<name>NRAM_I76A9</name>
<dbReference type="EC" id="3.2.1.18" evidence="1"/>
<dbReference type="EMBL" id="D00715">
    <property type="protein sequence ID" value="BAA00620.1"/>
    <property type="molecule type" value="Genomic_RNA"/>
</dbReference>
<dbReference type="EMBL" id="D21188">
    <property type="protein sequence ID" value="BAA04724.1"/>
    <property type="molecule type" value="Genomic_RNA"/>
</dbReference>
<dbReference type="SMR" id="Q09104"/>
<dbReference type="CAZy" id="GH34">
    <property type="family name" value="Glycoside Hydrolase Family 34"/>
</dbReference>
<dbReference type="GlyCosmos" id="Q09104">
    <property type="glycosylation" value="8 sites, No reported glycans"/>
</dbReference>
<dbReference type="GO" id="GO:0020002">
    <property type="term" value="C:host cell plasma membrane"/>
    <property type="evidence" value="ECO:0007669"/>
    <property type="project" value="UniProtKB-SubCell"/>
</dbReference>
<dbReference type="GO" id="GO:0016020">
    <property type="term" value="C:membrane"/>
    <property type="evidence" value="ECO:0007669"/>
    <property type="project" value="UniProtKB-UniRule"/>
</dbReference>
<dbReference type="GO" id="GO:0055036">
    <property type="term" value="C:virion membrane"/>
    <property type="evidence" value="ECO:0007669"/>
    <property type="project" value="UniProtKB-SubCell"/>
</dbReference>
<dbReference type="GO" id="GO:0004308">
    <property type="term" value="F:exo-alpha-sialidase activity"/>
    <property type="evidence" value="ECO:0007669"/>
    <property type="project" value="UniProtKB-UniRule"/>
</dbReference>
<dbReference type="GO" id="GO:0046872">
    <property type="term" value="F:metal ion binding"/>
    <property type="evidence" value="ECO:0007669"/>
    <property type="project" value="UniProtKB-UniRule"/>
</dbReference>
<dbReference type="GO" id="GO:0005975">
    <property type="term" value="P:carbohydrate metabolic process"/>
    <property type="evidence" value="ECO:0007669"/>
    <property type="project" value="InterPro"/>
</dbReference>
<dbReference type="GO" id="GO:0046761">
    <property type="term" value="P:viral budding from plasma membrane"/>
    <property type="evidence" value="ECO:0007669"/>
    <property type="project" value="UniProtKB-UniRule"/>
</dbReference>
<dbReference type="CDD" id="cd15483">
    <property type="entry name" value="Influenza_NA"/>
    <property type="match status" value="1"/>
</dbReference>
<dbReference type="Gene3D" id="2.120.10.10">
    <property type="match status" value="1"/>
</dbReference>
<dbReference type="HAMAP" id="MF_04071">
    <property type="entry name" value="INFV_NRAM"/>
    <property type="match status" value="1"/>
</dbReference>
<dbReference type="InterPro" id="IPR001860">
    <property type="entry name" value="Glyco_hydro_34"/>
</dbReference>
<dbReference type="InterPro" id="IPR033654">
    <property type="entry name" value="Sialidase_Influenza_A/B"/>
</dbReference>
<dbReference type="InterPro" id="IPR036278">
    <property type="entry name" value="Sialidase_sf"/>
</dbReference>
<dbReference type="Pfam" id="PF00064">
    <property type="entry name" value="Neur"/>
    <property type="match status" value="1"/>
</dbReference>
<dbReference type="SUPFAM" id="SSF50939">
    <property type="entry name" value="Sialidases"/>
    <property type="match status" value="1"/>
</dbReference>
<accession>Q09104</accession>
<accession>Q67355</accession>
<gene>
    <name evidence="1" type="primary">NA</name>
</gene>
<reference key="1">
    <citation type="journal article" date="1991" name="J. Gen. Virol.">
        <title>Evolutionary pathways of N2 neuraminidases of swine and human influenza A viruses: origin of the neuraminidase genes of two reassortants (H1N2) isolated from pigs.</title>
        <authorList>
            <person name="Nerome K."/>
            <person name="Kanegae Y."/>
            <person name="Yoshioka Y."/>
            <person name="Itamura S."/>
            <person name="Ishida M."/>
            <person name="Gojobori T."/>
            <person name="Oya A."/>
        </authorList>
    </citation>
    <scope>NUCLEOTIDE SEQUENCE [GENOMIC RNA]</scope>
</reference>
<reference key="2">
    <citation type="journal article" date="1995" name="J. Gen. Virol.">
        <title>Genetic analysis of porcine H3N2 viruses originating in Southern China.</title>
        <authorList>
            <person name="Nerome K."/>
            <person name="Kanegae Y."/>
            <person name="Shortridge K.F."/>
            <person name="Sugita S."/>
            <person name="Ishida M."/>
        </authorList>
    </citation>
    <scope>NUCLEOTIDE SEQUENCE [GENOMIC RNA] OF 24-469</scope>
</reference>
<reference key="3">
    <citation type="journal article" date="2004" name="Virus Res.">
        <title>Assembly and budding of influenza virus.</title>
        <authorList>
            <person name="Nayak D.P."/>
            <person name="Hui E.K."/>
            <person name="Barman S."/>
        </authorList>
    </citation>
    <scope>REVIEW</scope>
</reference>
<reference key="4">
    <citation type="journal article" date="2005" name="N. Engl. J. Med.">
        <title>Neuraminidase inhibitors for influenza.</title>
        <authorList>
            <person name="Moscona A."/>
        </authorList>
    </citation>
    <scope>REVIEW</scope>
</reference>
<reference key="5">
    <citation type="journal article" date="2005" name="Biol. Pharm. Bull.">
        <title>Sialobiology of influenza: molecular mechanism of host range variation of influenza viruses.</title>
        <authorList>
            <person name="Suzuki Y."/>
        </authorList>
    </citation>
    <scope>REVIEW</scope>
</reference>
<keyword id="KW-0106">Calcium</keyword>
<keyword id="KW-1015">Disulfide bond</keyword>
<keyword id="KW-0325">Glycoprotein</keyword>
<keyword id="KW-0326">Glycosidase</keyword>
<keyword id="KW-1032">Host cell membrane</keyword>
<keyword id="KW-1043">Host membrane</keyword>
<keyword id="KW-0378">Hydrolase</keyword>
<keyword id="KW-0472">Membrane</keyword>
<keyword id="KW-0479">Metal-binding</keyword>
<keyword id="KW-0735">Signal-anchor</keyword>
<keyword id="KW-0812">Transmembrane</keyword>
<keyword id="KW-1133">Transmembrane helix</keyword>
<keyword id="KW-0946">Virion</keyword>
<organism>
    <name type="scientific">Influenza A virus (strain A/Swine/Hong Kong/3/1976 H3N2)</name>
    <dbReference type="NCBI Taxonomy" id="380216"/>
    <lineage>
        <taxon>Viruses</taxon>
        <taxon>Riboviria</taxon>
        <taxon>Orthornavirae</taxon>
        <taxon>Negarnaviricota</taxon>
        <taxon>Polyploviricotina</taxon>
        <taxon>Insthoviricetes</taxon>
        <taxon>Articulavirales</taxon>
        <taxon>Orthomyxoviridae</taxon>
        <taxon>Alphainfluenzavirus</taxon>
        <taxon>Alphainfluenzavirus influenzae</taxon>
        <taxon>Influenza A virus</taxon>
    </lineage>
</organism>
<protein>
    <recommendedName>
        <fullName evidence="1">Neuraminidase</fullName>
        <ecNumber evidence="1">3.2.1.18</ecNumber>
    </recommendedName>
</protein>
<sequence>MNPNQKIMTIGSVSLIIAAVCFLMQIAILVTTVTLHFKQCECDSPSNNQVKPCEPIIIERNITEIVYLNNTTIEKETCPKLVEYRNWSKPQCKITGFAPFSKDNSIRLSAGGDIWVTREPYVSCDPGKCYQFALGQGTTLDNKHSNDTIHDRIPHRTLLMNELGVPFHLGTRQVCIAWSSSSCHDGKAWLHVCVTGDDKNATASFIYDGRLVDSIGSWSQNILRTQESECVCINGTCTVVMTDGSASGRADTRILFIEEGKIVHISPLSGSAQHVEECSCYPRYPNVRCICRDNWKGSNRPIVDINMKDYSIDSSYVCSGLVGDTPRNDDRSSKSNCRNPNNEKGNHGVKGWAFDNGDDVWMGRTISKDLRSGYETFKVIGGWFTPNSKSQVNRQVIVDSDNRSGYSGIFSVEGKSCINRCFYVELIRGRGQETRVWWTSNSIVVFCGTSGTYGKGSWPDGANINFMPI</sequence>
<feature type="chain" id="PRO_0000078727" description="Neuraminidase">
    <location>
        <begin position="1"/>
        <end position="469"/>
    </location>
</feature>
<feature type="topological domain" description="Intravirion" evidence="1">
    <location>
        <begin position="1"/>
        <end position="9"/>
    </location>
</feature>
<feature type="transmembrane region" description="Helical" evidence="1">
    <location>
        <begin position="10"/>
        <end position="30"/>
    </location>
</feature>
<feature type="topological domain" description="Virion surface" evidence="1">
    <location>
        <begin position="31"/>
        <end position="469"/>
    </location>
</feature>
<feature type="region of interest" description="Involved in apical transport and lipid raft association" evidence="1">
    <location>
        <begin position="11"/>
        <end position="33"/>
    </location>
</feature>
<feature type="region of interest" description="Hypervariable stalk region" evidence="1">
    <location>
        <begin position="36"/>
        <end position="88"/>
    </location>
</feature>
<feature type="region of interest" description="Head of neuraminidase" evidence="1">
    <location>
        <begin position="91"/>
        <end position="469"/>
    </location>
</feature>
<feature type="region of interest" description="Disordered" evidence="2">
    <location>
        <begin position="323"/>
        <end position="344"/>
    </location>
</feature>
<feature type="compositionally biased region" description="Polar residues" evidence="2">
    <location>
        <begin position="334"/>
        <end position="343"/>
    </location>
</feature>
<feature type="active site" description="Proton donor/acceptor" evidence="1">
    <location>
        <position position="151"/>
    </location>
</feature>
<feature type="active site" description="Nucleophile" evidence="1">
    <location>
        <position position="406"/>
    </location>
</feature>
<feature type="binding site" evidence="1">
    <location>
        <position position="118"/>
    </location>
    <ligand>
        <name>substrate</name>
    </ligand>
</feature>
<feature type="binding site" evidence="1">
    <location>
        <position position="152"/>
    </location>
    <ligand>
        <name>substrate</name>
    </ligand>
</feature>
<feature type="binding site" evidence="1">
    <location>
        <begin position="276"/>
        <end position="277"/>
    </location>
    <ligand>
        <name>substrate</name>
    </ligand>
</feature>
<feature type="binding site" evidence="1">
    <location>
        <position position="292"/>
    </location>
    <ligand>
        <name>substrate</name>
    </ligand>
</feature>
<feature type="binding site" evidence="1">
    <location>
        <position position="293"/>
    </location>
    <ligand>
        <name>Ca(2+)</name>
        <dbReference type="ChEBI" id="CHEBI:29108"/>
    </ligand>
</feature>
<feature type="binding site" evidence="1">
    <location>
        <position position="297"/>
    </location>
    <ligand>
        <name>Ca(2+)</name>
        <dbReference type="ChEBI" id="CHEBI:29108"/>
    </ligand>
</feature>
<feature type="binding site" evidence="1">
    <location>
        <position position="324"/>
    </location>
    <ligand>
        <name>Ca(2+)</name>
        <dbReference type="ChEBI" id="CHEBI:29108"/>
    </ligand>
</feature>
<feature type="binding site" evidence="1">
    <location>
        <position position="371"/>
    </location>
    <ligand>
        <name>substrate</name>
    </ligand>
</feature>
<feature type="glycosylation site" description="N-linked (GlcNAc...) asparagine; by host" evidence="1">
    <location>
        <position position="61"/>
    </location>
</feature>
<feature type="glycosylation site" description="N-linked (GlcNAc...) asparagine; by host" evidence="1">
    <location>
        <position position="69"/>
    </location>
</feature>
<feature type="glycosylation site" description="N-linked (GlcNAc...) asparagine; by host" evidence="1">
    <location>
        <position position="70"/>
    </location>
</feature>
<feature type="glycosylation site" description="N-linked (GlcNAc...) asparagine; by host" evidence="1">
    <location>
        <position position="86"/>
    </location>
</feature>
<feature type="glycosylation site" description="N-linked (GlcNAc...) asparagine; by host" evidence="1">
    <location>
        <position position="146"/>
    </location>
</feature>
<feature type="glycosylation site" description="N-linked (GlcNAc...) asparagine; by host" evidence="1">
    <location>
        <position position="200"/>
    </location>
</feature>
<feature type="glycosylation site" description="N-linked (GlcNAc...) asparagine; by host" evidence="1">
    <location>
        <position position="234"/>
    </location>
</feature>
<feature type="glycosylation site" description="N-linked (GlcNAc...) asparagine; by host" evidence="1">
    <location>
        <position position="402"/>
    </location>
</feature>
<feature type="disulfide bond" evidence="1">
    <location>
        <begin position="92"/>
        <end position="417"/>
    </location>
</feature>
<feature type="disulfide bond" evidence="1">
    <location>
        <begin position="124"/>
        <end position="129"/>
    </location>
</feature>
<feature type="disulfide bond" evidence="1">
    <location>
        <begin position="183"/>
        <end position="230"/>
    </location>
</feature>
<feature type="disulfide bond" evidence="1">
    <location>
        <begin position="232"/>
        <end position="237"/>
    </location>
</feature>
<feature type="disulfide bond" evidence="1">
    <location>
        <begin position="278"/>
        <end position="291"/>
    </location>
</feature>
<feature type="disulfide bond" evidence="1">
    <location>
        <begin position="280"/>
        <end position="289"/>
    </location>
</feature>
<feature type="disulfide bond" evidence="1">
    <location>
        <begin position="318"/>
        <end position="337"/>
    </location>
</feature>
<feature type="disulfide bond" evidence="1">
    <location>
        <begin position="421"/>
        <end position="447"/>
    </location>
</feature>
<proteinExistence type="inferred from homology"/>
<evidence type="ECO:0000255" key="1">
    <source>
        <dbReference type="HAMAP-Rule" id="MF_04071"/>
    </source>
</evidence>
<evidence type="ECO:0000256" key="2">
    <source>
        <dbReference type="SAM" id="MobiDB-lite"/>
    </source>
</evidence>
<organismHost>
    <name type="scientific">Aves</name>
    <dbReference type="NCBI Taxonomy" id="8782"/>
</organismHost>
<organismHost>
    <name type="scientific">Cetacea</name>
    <name type="common">whales</name>
    <dbReference type="NCBI Taxonomy" id="9721"/>
</organismHost>
<organismHost>
    <name type="scientific">Homo sapiens</name>
    <name type="common">Human</name>
    <dbReference type="NCBI Taxonomy" id="9606"/>
</organismHost>
<organismHost>
    <name type="scientific">Phocidae</name>
    <name type="common">true seals</name>
    <dbReference type="NCBI Taxonomy" id="9709"/>
</organismHost>
<organismHost>
    <name type="scientific">Sus scrofa</name>
    <name type="common">Pig</name>
    <dbReference type="NCBI Taxonomy" id="9823"/>
</organismHost>